<reference key="1">
    <citation type="submission" date="2008-02" db="EMBL/GenBank/DDBJ databases">
        <title>Complete sequence of chromosome of Methylobacterium sp. 4-46.</title>
        <authorList>
            <consortium name="US DOE Joint Genome Institute"/>
            <person name="Copeland A."/>
            <person name="Lucas S."/>
            <person name="Lapidus A."/>
            <person name="Glavina del Rio T."/>
            <person name="Dalin E."/>
            <person name="Tice H."/>
            <person name="Bruce D."/>
            <person name="Goodwin L."/>
            <person name="Pitluck S."/>
            <person name="Chertkov O."/>
            <person name="Brettin T."/>
            <person name="Detter J.C."/>
            <person name="Han C."/>
            <person name="Kuske C.R."/>
            <person name="Schmutz J."/>
            <person name="Larimer F."/>
            <person name="Land M."/>
            <person name="Hauser L."/>
            <person name="Kyrpides N."/>
            <person name="Ivanova N."/>
            <person name="Marx C.J."/>
            <person name="Richardson P."/>
        </authorList>
    </citation>
    <scope>NUCLEOTIDE SEQUENCE [LARGE SCALE GENOMIC DNA]</scope>
    <source>
        <strain>4-46</strain>
    </source>
</reference>
<organism>
    <name type="scientific">Methylobacterium sp. (strain 4-46)</name>
    <dbReference type="NCBI Taxonomy" id="426117"/>
    <lineage>
        <taxon>Bacteria</taxon>
        <taxon>Pseudomonadati</taxon>
        <taxon>Pseudomonadota</taxon>
        <taxon>Alphaproteobacteria</taxon>
        <taxon>Hyphomicrobiales</taxon>
        <taxon>Methylobacteriaceae</taxon>
        <taxon>Methylobacterium</taxon>
    </lineage>
</organism>
<gene>
    <name evidence="1" type="primary">deoB</name>
    <name type="ordered locus">M446_4521</name>
</gene>
<keyword id="KW-0963">Cytoplasm</keyword>
<keyword id="KW-0413">Isomerase</keyword>
<keyword id="KW-0464">Manganese</keyword>
<keyword id="KW-0479">Metal-binding</keyword>
<name>DEOB_METS4</name>
<evidence type="ECO:0000255" key="1">
    <source>
        <dbReference type="HAMAP-Rule" id="MF_00740"/>
    </source>
</evidence>
<feature type="chain" id="PRO_1000133089" description="Phosphopentomutase">
    <location>
        <begin position="1"/>
        <end position="405"/>
    </location>
</feature>
<feature type="binding site" evidence="1">
    <location>
        <position position="10"/>
    </location>
    <ligand>
        <name>Mn(2+)</name>
        <dbReference type="ChEBI" id="CHEBI:29035"/>
        <label>1</label>
    </ligand>
</feature>
<feature type="binding site" evidence="1">
    <location>
        <position position="305"/>
    </location>
    <ligand>
        <name>Mn(2+)</name>
        <dbReference type="ChEBI" id="CHEBI:29035"/>
        <label>2</label>
    </ligand>
</feature>
<feature type="binding site" evidence="1">
    <location>
        <position position="310"/>
    </location>
    <ligand>
        <name>Mn(2+)</name>
        <dbReference type="ChEBI" id="CHEBI:29035"/>
        <label>2</label>
    </ligand>
</feature>
<feature type="binding site" evidence="1">
    <location>
        <position position="346"/>
    </location>
    <ligand>
        <name>Mn(2+)</name>
        <dbReference type="ChEBI" id="CHEBI:29035"/>
        <label>1</label>
    </ligand>
</feature>
<feature type="binding site" evidence="1">
    <location>
        <position position="347"/>
    </location>
    <ligand>
        <name>Mn(2+)</name>
        <dbReference type="ChEBI" id="CHEBI:29035"/>
        <label>1</label>
    </ligand>
</feature>
<feature type="binding site" evidence="1">
    <location>
        <position position="358"/>
    </location>
    <ligand>
        <name>Mn(2+)</name>
        <dbReference type="ChEBI" id="CHEBI:29035"/>
        <label>2</label>
    </ligand>
</feature>
<dbReference type="EC" id="5.4.2.7" evidence="1"/>
<dbReference type="EMBL" id="CP000943">
    <property type="protein sequence ID" value="ACA18862.1"/>
    <property type="molecule type" value="Genomic_DNA"/>
</dbReference>
<dbReference type="RefSeq" id="WP_012334251.1">
    <property type="nucleotide sequence ID" value="NC_010511.1"/>
</dbReference>
<dbReference type="SMR" id="B0UPC1"/>
<dbReference type="STRING" id="426117.M446_4521"/>
<dbReference type="KEGG" id="met:M446_4521"/>
<dbReference type="eggNOG" id="COG1015">
    <property type="taxonomic scope" value="Bacteria"/>
</dbReference>
<dbReference type="HOGENOM" id="CLU_053861_0_0_5"/>
<dbReference type="UniPathway" id="UPA00002">
    <property type="reaction ID" value="UER00467"/>
</dbReference>
<dbReference type="GO" id="GO:0005829">
    <property type="term" value="C:cytosol"/>
    <property type="evidence" value="ECO:0007669"/>
    <property type="project" value="TreeGrafter"/>
</dbReference>
<dbReference type="GO" id="GO:0000287">
    <property type="term" value="F:magnesium ion binding"/>
    <property type="evidence" value="ECO:0007669"/>
    <property type="project" value="InterPro"/>
</dbReference>
<dbReference type="GO" id="GO:0030145">
    <property type="term" value="F:manganese ion binding"/>
    <property type="evidence" value="ECO:0007669"/>
    <property type="project" value="UniProtKB-UniRule"/>
</dbReference>
<dbReference type="GO" id="GO:0008973">
    <property type="term" value="F:phosphopentomutase activity"/>
    <property type="evidence" value="ECO:0007669"/>
    <property type="project" value="UniProtKB-UniRule"/>
</dbReference>
<dbReference type="GO" id="GO:0006018">
    <property type="term" value="P:2-deoxyribose 1-phosphate catabolic process"/>
    <property type="evidence" value="ECO:0007669"/>
    <property type="project" value="UniProtKB-UniRule"/>
</dbReference>
<dbReference type="GO" id="GO:0006015">
    <property type="term" value="P:5-phosphoribose 1-diphosphate biosynthetic process"/>
    <property type="evidence" value="ECO:0007669"/>
    <property type="project" value="UniProtKB-UniPathway"/>
</dbReference>
<dbReference type="GO" id="GO:0043094">
    <property type="term" value="P:metabolic compound salvage"/>
    <property type="evidence" value="ECO:0007669"/>
    <property type="project" value="InterPro"/>
</dbReference>
<dbReference type="GO" id="GO:0009117">
    <property type="term" value="P:nucleotide metabolic process"/>
    <property type="evidence" value="ECO:0007669"/>
    <property type="project" value="InterPro"/>
</dbReference>
<dbReference type="CDD" id="cd16009">
    <property type="entry name" value="PPM"/>
    <property type="match status" value="1"/>
</dbReference>
<dbReference type="Gene3D" id="3.40.720.10">
    <property type="entry name" value="Alkaline Phosphatase, subunit A"/>
    <property type="match status" value="1"/>
</dbReference>
<dbReference type="Gene3D" id="3.30.70.1250">
    <property type="entry name" value="Phosphopentomutase"/>
    <property type="match status" value="1"/>
</dbReference>
<dbReference type="HAMAP" id="MF_00740">
    <property type="entry name" value="Phosphopentomut"/>
    <property type="match status" value="1"/>
</dbReference>
<dbReference type="InterPro" id="IPR017850">
    <property type="entry name" value="Alkaline_phosphatase_core_sf"/>
</dbReference>
<dbReference type="InterPro" id="IPR010045">
    <property type="entry name" value="DeoB"/>
</dbReference>
<dbReference type="InterPro" id="IPR006124">
    <property type="entry name" value="Metalloenzyme"/>
</dbReference>
<dbReference type="InterPro" id="IPR024052">
    <property type="entry name" value="Phosphopentomutase_DeoB_cap_sf"/>
</dbReference>
<dbReference type="NCBIfam" id="TIGR01696">
    <property type="entry name" value="deoB"/>
    <property type="match status" value="1"/>
</dbReference>
<dbReference type="NCBIfam" id="NF003766">
    <property type="entry name" value="PRK05362.1"/>
    <property type="match status" value="1"/>
</dbReference>
<dbReference type="PANTHER" id="PTHR21110">
    <property type="entry name" value="PHOSPHOPENTOMUTASE"/>
    <property type="match status" value="1"/>
</dbReference>
<dbReference type="PANTHER" id="PTHR21110:SF0">
    <property type="entry name" value="PHOSPHOPENTOMUTASE"/>
    <property type="match status" value="1"/>
</dbReference>
<dbReference type="Pfam" id="PF01676">
    <property type="entry name" value="Metalloenzyme"/>
    <property type="match status" value="1"/>
</dbReference>
<dbReference type="PIRSF" id="PIRSF001491">
    <property type="entry name" value="Ppentomutase"/>
    <property type="match status" value="1"/>
</dbReference>
<dbReference type="SUPFAM" id="SSF53649">
    <property type="entry name" value="Alkaline phosphatase-like"/>
    <property type="match status" value="1"/>
</dbReference>
<dbReference type="SUPFAM" id="SSF143856">
    <property type="entry name" value="DeoB insert domain-like"/>
    <property type="match status" value="1"/>
</dbReference>
<protein>
    <recommendedName>
        <fullName evidence="1">Phosphopentomutase</fullName>
        <ecNumber evidence="1">5.4.2.7</ecNumber>
    </recommendedName>
    <alternativeName>
        <fullName evidence="1">Phosphodeoxyribomutase</fullName>
    </alternativeName>
</protein>
<comment type="function">
    <text evidence="1">Isomerase that catalyzes the conversion of deoxy-ribose 1-phosphate (dRib-1-P) and ribose 1-phosphate (Rib-1-P) to deoxy-ribose 5-phosphate (dRib-5-P) and ribose 5-phosphate (Rib-5-P), respectively.</text>
</comment>
<comment type="catalytic activity">
    <reaction evidence="1">
        <text>2-deoxy-alpha-D-ribose 1-phosphate = 2-deoxy-D-ribose 5-phosphate</text>
        <dbReference type="Rhea" id="RHEA:27658"/>
        <dbReference type="ChEBI" id="CHEBI:57259"/>
        <dbReference type="ChEBI" id="CHEBI:62877"/>
        <dbReference type="EC" id="5.4.2.7"/>
    </reaction>
</comment>
<comment type="catalytic activity">
    <reaction evidence="1">
        <text>alpha-D-ribose 1-phosphate = D-ribose 5-phosphate</text>
        <dbReference type="Rhea" id="RHEA:18793"/>
        <dbReference type="ChEBI" id="CHEBI:57720"/>
        <dbReference type="ChEBI" id="CHEBI:78346"/>
        <dbReference type="EC" id="5.4.2.7"/>
    </reaction>
</comment>
<comment type="cofactor">
    <cofactor evidence="1">
        <name>Mn(2+)</name>
        <dbReference type="ChEBI" id="CHEBI:29035"/>
    </cofactor>
    <text evidence="1">Binds 2 manganese ions.</text>
</comment>
<comment type="pathway">
    <text evidence="1">Carbohydrate degradation; 2-deoxy-D-ribose 1-phosphate degradation; D-glyceraldehyde 3-phosphate and acetaldehyde from 2-deoxy-alpha-D-ribose 1-phosphate: step 1/2.</text>
</comment>
<comment type="subcellular location">
    <subcellularLocation>
        <location evidence="1">Cytoplasm</location>
    </subcellularLocation>
</comment>
<comment type="similarity">
    <text evidence="1">Belongs to the phosphopentomutase family.</text>
</comment>
<accession>B0UPC1</accession>
<sequence>MTRALVIVLDSVGIGGAPDGAAYGDGGADTLGHIAEACAEGRGDRPGLRAGPLRLPHLAGLGLGLAAREASGRMPPGLAPDGPVAGAWGHAVETARGKDTVSGHWEIAGAPVDFDWGRFPATRPSFPPDLTRALIEEGNLPGILGDCHASGTAVIEAYGAEHLRSGKPICYTSVDSVFQIAAHEEAFGLERLYALCGIARRLCDPYRIGRVIARPFAGSAGTGFVRTANRRDFATPPPGDTLLDRLAAAGRPLVSVGKIGDIFAHRHTGTEVKPAGNDACLDAALAAFADLGPGGLVFANLVDFDTEYGHRRDVPGYAAALERFDARLPEIRAALRPGDLCLVTADHGNDPTWTGTDHTREQVPVLAFGPGQRPGPIGRREGLADIGATVAAHLGLALPAGRSWL</sequence>
<proteinExistence type="inferred from homology"/>